<comment type="function">
    <text evidence="1">Involved in regulation of mitochondrial membrane ATP synthase. Necessary for H(+) conduction of ATP synthase. Facilitates energy-driven catalysis of ATP synthesis by blocking a proton leak through an alternative proton exit pathway.</text>
</comment>
<comment type="subunit">
    <text evidence="1">Homotetramer. Associates with ATP synthase.</text>
</comment>
<comment type="subcellular location">
    <subcellularLocation>
        <location evidence="1">Mitochondrion</location>
    </subcellularLocation>
    <subcellularLocation>
        <location evidence="1">Mitochondrion inner membrane</location>
    </subcellularLocation>
</comment>
<comment type="similarity">
    <text evidence="3">Belongs to the ATP synthase subunit s family.</text>
</comment>
<evidence type="ECO:0000250" key="1">
    <source>
        <dbReference type="UniProtKB" id="P22027"/>
    </source>
</evidence>
<evidence type="ECO:0000250" key="2">
    <source>
        <dbReference type="UniProtKB" id="Q99766"/>
    </source>
</evidence>
<evidence type="ECO:0000305" key="3"/>
<evidence type="ECO:0000312" key="4">
    <source>
        <dbReference type="RGD" id="1359208"/>
    </source>
</evidence>
<accession>Q5XIM4</accession>
<protein>
    <recommendedName>
        <fullName evidence="3">ATP synthase subunit s, mitochondrial</fullName>
    </recommendedName>
    <alternativeName>
        <fullName>ATP synthase-coupling factor B</fullName>
    </alternativeName>
    <alternativeName>
        <fullName evidence="2">Distal membrane arm assembly complex 2-like protein</fullName>
    </alternativeName>
    <alternativeName>
        <fullName>Mitochondrial ATP synthase regulatory component factor B</fullName>
    </alternativeName>
</protein>
<gene>
    <name evidence="4" type="primary">Dmac2l</name>
    <name evidence="4" type="synonym">Atp5s</name>
</gene>
<feature type="transit peptide" description="Mitochondrion" evidence="1">
    <location>
        <begin position="1"/>
        <end position="25"/>
    </location>
</feature>
<feature type="chain" id="PRO_0000002541" description="ATP synthase subunit s, mitochondrial">
    <location>
        <begin position="26"/>
        <end position="200"/>
    </location>
</feature>
<feature type="repeat" description="LRR 1" evidence="1">
    <location>
        <begin position="62"/>
        <end position="87"/>
    </location>
</feature>
<feature type="repeat" description="LRR 2" evidence="1">
    <location>
        <begin position="88"/>
        <end position="116"/>
    </location>
</feature>
<feature type="repeat" description="LRR 3" evidence="1">
    <location>
        <begin position="117"/>
        <end position="141"/>
    </location>
</feature>
<feature type="repeat" description="LRR 4" evidence="1">
    <location>
        <begin position="142"/>
        <end position="173"/>
    </location>
</feature>
<feature type="region of interest" description="N-terminal domain" evidence="1">
    <location>
        <begin position="1"/>
        <end position="61"/>
    </location>
</feature>
<feature type="binding site" evidence="1">
    <location>
        <position position="59"/>
    </location>
    <ligand>
        <name>Mg(2+)</name>
        <dbReference type="ChEBI" id="CHEBI:18420"/>
    </ligand>
</feature>
<feature type="binding site" evidence="1">
    <location>
        <position position="93"/>
    </location>
    <ligand>
        <name>Mg(2+)</name>
        <dbReference type="ChEBI" id="CHEBI:18420"/>
    </ligand>
</feature>
<dbReference type="EMBL" id="BC083655">
    <property type="protein sequence ID" value="AAH83655.1"/>
    <property type="molecule type" value="mRNA"/>
</dbReference>
<dbReference type="RefSeq" id="NP_001007750.1">
    <property type="nucleotide sequence ID" value="NM_001007749.1"/>
</dbReference>
<dbReference type="RefSeq" id="XP_006240236.1">
    <property type="nucleotide sequence ID" value="XM_006240174.5"/>
</dbReference>
<dbReference type="RefSeq" id="XP_006240237.1">
    <property type="nucleotide sequence ID" value="XM_006240175.5"/>
</dbReference>
<dbReference type="RefSeq" id="XP_006240238.1">
    <property type="nucleotide sequence ID" value="XM_006240176.5"/>
</dbReference>
<dbReference type="SMR" id="Q5XIM4"/>
<dbReference type="FunCoup" id="Q5XIM4">
    <property type="interactions" value="1543"/>
</dbReference>
<dbReference type="STRING" id="10116.ENSRNOP00000006509"/>
<dbReference type="iPTMnet" id="Q5XIM4"/>
<dbReference type="PhosphoSitePlus" id="Q5XIM4"/>
<dbReference type="PaxDb" id="10116-ENSRNOP00000006509"/>
<dbReference type="Ensembl" id="ENSRNOT00000006509.6">
    <property type="protein sequence ID" value="ENSRNOP00000006509.4"/>
    <property type="gene ID" value="ENSRNOG00000004893.6"/>
</dbReference>
<dbReference type="GeneID" id="362749"/>
<dbReference type="KEGG" id="rno:362749"/>
<dbReference type="UCSC" id="RGD:1359208">
    <property type="organism name" value="rat"/>
</dbReference>
<dbReference type="AGR" id="RGD:1359208"/>
<dbReference type="CTD" id="27109"/>
<dbReference type="RGD" id="1359208">
    <property type="gene designation" value="Dmac2l"/>
</dbReference>
<dbReference type="eggNOG" id="KOG3864">
    <property type="taxonomic scope" value="Eukaryota"/>
</dbReference>
<dbReference type="GeneTree" id="ENSGT00940000156502"/>
<dbReference type="HOGENOM" id="CLU_100746_0_0_1"/>
<dbReference type="InParanoid" id="Q5XIM4"/>
<dbReference type="OMA" id="IFDMLYV"/>
<dbReference type="OrthoDB" id="5859291at2759"/>
<dbReference type="PhylomeDB" id="Q5XIM4"/>
<dbReference type="TreeFam" id="TF315274"/>
<dbReference type="Reactome" id="R-RNO-163210">
    <property type="pathway name" value="Formation of ATP by chemiosmotic coupling"/>
</dbReference>
<dbReference type="Reactome" id="R-RNO-8949613">
    <property type="pathway name" value="Cristae formation"/>
</dbReference>
<dbReference type="PRO" id="PR:Q5XIM4"/>
<dbReference type="Proteomes" id="UP000002494">
    <property type="component" value="Chromosome 6"/>
</dbReference>
<dbReference type="Bgee" id="ENSRNOG00000004893">
    <property type="expression patterns" value="Expressed in heart and 20 other cell types or tissues"/>
</dbReference>
<dbReference type="GO" id="GO:0005737">
    <property type="term" value="C:cytoplasm"/>
    <property type="evidence" value="ECO:0000318"/>
    <property type="project" value="GO_Central"/>
</dbReference>
<dbReference type="GO" id="GO:0005743">
    <property type="term" value="C:mitochondrial inner membrane"/>
    <property type="evidence" value="ECO:0007669"/>
    <property type="project" value="UniProtKB-SubCell"/>
</dbReference>
<dbReference type="GO" id="GO:0045259">
    <property type="term" value="C:proton-transporting ATP synthase complex"/>
    <property type="evidence" value="ECO:0007669"/>
    <property type="project" value="UniProtKB-KW"/>
</dbReference>
<dbReference type="GO" id="GO:0046872">
    <property type="term" value="F:metal ion binding"/>
    <property type="evidence" value="ECO:0007669"/>
    <property type="project" value="UniProtKB-KW"/>
</dbReference>
<dbReference type="GO" id="GO:0006754">
    <property type="term" value="P:ATP biosynthetic process"/>
    <property type="evidence" value="ECO:0007669"/>
    <property type="project" value="UniProtKB-KW"/>
</dbReference>
<dbReference type="GO" id="GO:1902600">
    <property type="term" value="P:proton transmembrane transport"/>
    <property type="evidence" value="ECO:0007669"/>
    <property type="project" value="UniProtKB-KW"/>
</dbReference>
<dbReference type="Gene3D" id="3.80.10.10">
    <property type="entry name" value="Ribonuclease Inhibitor"/>
    <property type="match status" value="1"/>
</dbReference>
<dbReference type="InterPro" id="IPR032675">
    <property type="entry name" value="LRR_dom_sf"/>
</dbReference>
<dbReference type="SUPFAM" id="SSF52047">
    <property type="entry name" value="RNI-like"/>
    <property type="match status" value="1"/>
</dbReference>
<name>ATP5S_RAT</name>
<sequence>MMMFGKISRQLFSLKKIPWSCDSRYFWEWLNTVFNKVDYERIKDVGPDRAASEWLLRCGAKVRYCGHQKWLQDYNKLPGGSVDRYKIQAIDATDSCIMDIGFDHLVGLEHVERITLCRCHYIEDNCLQRLSQLENLRKSLLELEIIACGNVTDNGVIALRHFKNLKYLFLSDLPGIKDKEYLAEVFTKALPSLELKLNLK</sequence>
<reference key="1">
    <citation type="journal article" date="2004" name="Genome Res.">
        <title>The status, quality, and expansion of the NIH full-length cDNA project: the Mammalian Gene Collection (MGC).</title>
        <authorList>
            <consortium name="The MGC Project Team"/>
        </authorList>
    </citation>
    <scope>NUCLEOTIDE SEQUENCE [LARGE SCALE MRNA]</scope>
    <source>
        <tissue>Testis</tissue>
    </source>
</reference>
<organism>
    <name type="scientific">Rattus norvegicus</name>
    <name type="common">Rat</name>
    <dbReference type="NCBI Taxonomy" id="10116"/>
    <lineage>
        <taxon>Eukaryota</taxon>
        <taxon>Metazoa</taxon>
        <taxon>Chordata</taxon>
        <taxon>Craniata</taxon>
        <taxon>Vertebrata</taxon>
        <taxon>Euteleostomi</taxon>
        <taxon>Mammalia</taxon>
        <taxon>Eutheria</taxon>
        <taxon>Euarchontoglires</taxon>
        <taxon>Glires</taxon>
        <taxon>Rodentia</taxon>
        <taxon>Myomorpha</taxon>
        <taxon>Muroidea</taxon>
        <taxon>Muridae</taxon>
        <taxon>Murinae</taxon>
        <taxon>Rattus</taxon>
    </lineage>
</organism>
<keyword id="KW-0066">ATP synthesis</keyword>
<keyword id="KW-0138">CF(0)</keyword>
<keyword id="KW-0375">Hydrogen ion transport</keyword>
<keyword id="KW-0406">Ion transport</keyword>
<keyword id="KW-0433">Leucine-rich repeat</keyword>
<keyword id="KW-0460">Magnesium</keyword>
<keyword id="KW-0472">Membrane</keyword>
<keyword id="KW-0479">Metal-binding</keyword>
<keyword id="KW-0496">Mitochondrion</keyword>
<keyword id="KW-0999">Mitochondrion inner membrane</keyword>
<keyword id="KW-1185">Reference proteome</keyword>
<keyword id="KW-0677">Repeat</keyword>
<keyword id="KW-0809">Transit peptide</keyword>
<keyword id="KW-0813">Transport</keyword>
<proteinExistence type="evidence at transcript level"/>